<accession>Q12HM9</accession>
<organism>
    <name type="scientific">Shewanella denitrificans (strain OS217 / ATCC BAA-1090 / DSM 15013)</name>
    <dbReference type="NCBI Taxonomy" id="318161"/>
    <lineage>
        <taxon>Bacteria</taxon>
        <taxon>Pseudomonadati</taxon>
        <taxon>Pseudomonadota</taxon>
        <taxon>Gammaproteobacteria</taxon>
        <taxon>Alteromonadales</taxon>
        <taxon>Shewanellaceae</taxon>
        <taxon>Shewanella</taxon>
    </lineage>
</organism>
<feature type="chain" id="PRO_0000345903" description="tRNA modification GTPase MnmE">
    <location>
        <begin position="1"/>
        <end position="453"/>
    </location>
</feature>
<feature type="domain" description="TrmE-type G">
    <location>
        <begin position="215"/>
        <end position="376"/>
    </location>
</feature>
<feature type="binding site" evidence="1">
    <location>
        <position position="22"/>
    </location>
    <ligand>
        <name>(6S)-5-formyl-5,6,7,8-tetrahydrofolate</name>
        <dbReference type="ChEBI" id="CHEBI:57457"/>
    </ligand>
</feature>
<feature type="binding site" evidence="1">
    <location>
        <position position="79"/>
    </location>
    <ligand>
        <name>(6S)-5-formyl-5,6,7,8-tetrahydrofolate</name>
        <dbReference type="ChEBI" id="CHEBI:57457"/>
    </ligand>
</feature>
<feature type="binding site" evidence="1">
    <location>
        <position position="119"/>
    </location>
    <ligand>
        <name>(6S)-5-formyl-5,6,7,8-tetrahydrofolate</name>
        <dbReference type="ChEBI" id="CHEBI:57457"/>
    </ligand>
</feature>
<feature type="binding site" evidence="1">
    <location>
        <begin position="225"/>
        <end position="230"/>
    </location>
    <ligand>
        <name>GTP</name>
        <dbReference type="ChEBI" id="CHEBI:37565"/>
    </ligand>
</feature>
<feature type="binding site" evidence="1">
    <location>
        <position position="225"/>
    </location>
    <ligand>
        <name>K(+)</name>
        <dbReference type="ChEBI" id="CHEBI:29103"/>
    </ligand>
</feature>
<feature type="binding site" evidence="1">
    <location>
        <position position="229"/>
    </location>
    <ligand>
        <name>Mg(2+)</name>
        <dbReference type="ChEBI" id="CHEBI:18420"/>
    </ligand>
</feature>
<feature type="binding site" evidence="1">
    <location>
        <begin position="244"/>
        <end position="250"/>
    </location>
    <ligand>
        <name>GTP</name>
        <dbReference type="ChEBI" id="CHEBI:37565"/>
    </ligand>
</feature>
<feature type="binding site" evidence="1">
    <location>
        <position position="244"/>
    </location>
    <ligand>
        <name>K(+)</name>
        <dbReference type="ChEBI" id="CHEBI:29103"/>
    </ligand>
</feature>
<feature type="binding site" evidence="1">
    <location>
        <position position="246"/>
    </location>
    <ligand>
        <name>K(+)</name>
        <dbReference type="ChEBI" id="CHEBI:29103"/>
    </ligand>
</feature>
<feature type="binding site" evidence="1">
    <location>
        <position position="249"/>
    </location>
    <ligand>
        <name>K(+)</name>
        <dbReference type="ChEBI" id="CHEBI:29103"/>
    </ligand>
</feature>
<feature type="binding site" evidence="1">
    <location>
        <position position="250"/>
    </location>
    <ligand>
        <name>Mg(2+)</name>
        <dbReference type="ChEBI" id="CHEBI:18420"/>
    </ligand>
</feature>
<feature type="binding site" evidence="1">
    <location>
        <begin position="269"/>
        <end position="272"/>
    </location>
    <ligand>
        <name>GTP</name>
        <dbReference type="ChEBI" id="CHEBI:37565"/>
    </ligand>
</feature>
<feature type="binding site" evidence="1">
    <location>
        <begin position="334"/>
        <end position="337"/>
    </location>
    <ligand>
        <name>GTP</name>
        <dbReference type="ChEBI" id="CHEBI:37565"/>
    </ligand>
</feature>
<feature type="binding site" evidence="1">
    <location>
        <position position="453"/>
    </location>
    <ligand>
        <name>(6S)-5-formyl-5,6,7,8-tetrahydrofolate</name>
        <dbReference type="ChEBI" id="CHEBI:57457"/>
    </ligand>
</feature>
<name>MNME_SHEDO</name>
<dbReference type="EC" id="3.6.-.-" evidence="1"/>
<dbReference type="EMBL" id="CP000302">
    <property type="protein sequence ID" value="ABE57047.1"/>
    <property type="status" value="ALT_INIT"/>
    <property type="molecule type" value="Genomic_DNA"/>
</dbReference>
<dbReference type="RefSeq" id="WP_041406602.1">
    <property type="nucleotide sequence ID" value="NC_007954.1"/>
</dbReference>
<dbReference type="SMR" id="Q12HM9"/>
<dbReference type="STRING" id="318161.Sden_3774"/>
<dbReference type="KEGG" id="sdn:Sden_3774"/>
<dbReference type="eggNOG" id="COG0486">
    <property type="taxonomic scope" value="Bacteria"/>
</dbReference>
<dbReference type="HOGENOM" id="CLU_019624_4_1_6"/>
<dbReference type="OrthoDB" id="9805918at2"/>
<dbReference type="Proteomes" id="UP000001982">
    <property type="component" value="Chromosome"/>
</dbReference>
<dbReference type="GO" id="GO:0005829">
    <property type="term" value="C:cytosol"/>
    <property type="evidence" value="ECO:0007669"/>
    <property type="project" value="TreeGrafter"/>
</dbReference>
<dbReference type="GO" id="GO:0005525">
    <property type="term" value="F:GTP binding"/>
    <property type="evidence" value="ECO:0007669"/>
    <property type="project" value="UniProtKB-UniRule"/>
</dbReference>
<dbReference type="GO" id="GO:0003924">
    <property type="term" value="F:GTPase activity"/>
    <property type="evidence" value="ECO:0007669"/>
    <property type="project" value="UniProtKB-UniRule"/>
</dbReference>
<dbReference type="GO" id="GO:0046872">
    <property type="term" value="F:metal ion binding"/>
    <property type="evidence" value="ECO:0007669"/>
    <property type="project" value="UniProtKB-KW"/>
</dbReference>
<dbReference type="GO" id="GO:0030488">
    <property type="term" value="P:tRNA methylation"/>
    <property type="evidence" value="ECO:0007669"/>
    <property type="project" value="TreeGrafter"/>
</dbReference>
<dbReference type="GO" id="GO:0002098">
    <property type="term" value="P:tRNA wobble uridine modification"/>
    <property type="evidence" value="ECO:0007669"/>
    <property type="project" value="TreeGrafter"/>
</dbReference>
<dbReference type="CDD" id="cd04164">
    <property type="entry name" value="trmE"/>
    <property type="match status" value="1"/>
</dbReference>
<dbReference type="CDD" id="cd14858">
    <property type="entry name" value="TrmE_N"/>
    <property type="match status" value="1"/>
</dbReference>
<dbReference type="FunFam" id="3.30.1360.120:FF:000001">
    <property type="entry name" value="tRNA modification GTPase MnmE"/>
    <property type="match status" value="1"/>
</dbReference>
<dbReference type="FunFam" id="3.40.50.300:FF:000249">
    <property type="entry name" value="tRNA modification GTPase MnmE"/>
    <property type="match status" value="1"/>
</dbReference>
<dbReference type="Gene3D" id="3.40.50.300">
    <property type="entry name" value="P-loop containing nucleotide triphosphate hydrolases"/>
    <property type="match status" value="1"/>
</dbReference>
<dbReference type="Gene3D" id="3.30.1360.120">
    <property type="entry name" value="Probable tRNA modification gtpase trme, domain 1"/>
    <property type="match status" value="1"/>
</dbReference>
<dbReference type="Gene3D" id="1.20.120.430">
    <property type="entry name" value="tRNA modification GTPase MnmE domain 2"/>
    <property type="match status" value="1"/>
</dbReference>
<dbReference type="HAMAP" id="MF_00379">
    <property type="entry name" value="GTPase_MnmE"/>
    <property type="match status" value="1"/>
</dbReference>
<dbReference type="InterPro" id="IPR031168">
    <property type="entry name" value="G_TrmE"/>
</dbReference>
<dbReference type="InterPro" id="IPR006073">
    <property type="entry name" value="GTP-bd"/>
</dbReference>
<dbReference type="InterPro" id="IPR018948">
    <property type="entry name" value="GTP-bd_TrmE_N"/>
</dbReference>
<dbReference type="InterPro" id="IPR004520">
    <property type="entry name" value="GTPase_MnmE"/>
</dbReference>
<dbReference type="InterPro" id="IPR027368">
    <property type="entry name" value="MnmE_dom2"/>
</dbReference>
<dbReference type="InterPro" id="IPR025867">
    <property type="entry name" value="MnmE_helical"/>
</dbReference>
<dbReference type="InterPro" id="IPR027417">
    <property type="entry name" value="P-loop_NTPase"/>
</dbReference>
<dbReference type="InterPro" id="IPR005225">
    <property type="entry name" value="Small_GTP-bd"/>
</dbReference>
<dbReference type="InterPro" id="IPR027266">
    <property type="entry name" value="TrmE/GcvT_dom1"/>
</dbReference>
<dbReference type="NCBIfam" id="TIGR00450">
    <property type="entry name" value="mnmE_trmE_thdF"/>
    <property type="match status" value="1"/>
</dbReference>
<dbReference type="NCBIfam" id="NF003661">
    <property type="entry name" value="PRK05291.1-3"/>
    <property type="match status" value="1"/>
</dbReference>
<dbReference type="NCBIfam" id="TIGR00231">
    <property type="entry name" value="small_GTP"/>
    <property type="match status" value="1"/>
</dbReference>
<dbReference type="PANTHER" id="PTHR42714">
    <property type="entry name" value="TRNA MODIFICATION GTPASE GTPBP3"/>
    <property type="match status" value="1"/>
</dbReference>
<dbReference type="PANTHER" id="PTHR42714:SF2">
    <property type="entry name" value="TRNA MODIFICATION GTPASE GTPBP3, MITOCHONDRIAL"/>
    <property type="match status" value="1"/>
</dbReference>
<dbReference type="Pfam" id="PF01926">
    <property type="entry name" value="MMR_HSR1"/>
    <property type="match status" value="1"/>
</dbReference>
<dbReference type="Pfam" id="PF12631">
    <property type="entry name" value="MnmE_helical"/>
    <property type="match status" value="1"/>
</dbReference>
<dbReference type="Pfam" id="PF10396">
    <property type="entry name" value="TrmE_N"/>
    <property type="match status" value="1"/>
</dbReference>
<dbReference type="SUPFAM" id="SSF52540">
    <property type="entry name" value="P-loop containing nucleoside triphosphate hydrolases"/>
    <property type="match status" value="1"/>
</dbReference>
<dbReference type="SUPFAM" id="SSF116878">
    <property type="entry name" value="TrmE connector domain"/>
    <property type="match status" value="1"/>
</dbReference>
<dbReference type="PROSITE" id="PS51709">
    <property type="entry name" value="G_TRME"/>
    <property type="match status" value="1"/>
</dbReference>
<comment type="function">
    <text evidence="1">Exhibits a very high intrinsic GTPase hydrolysis rate. Involved in the addition of a carboxymethylaminomethyl (cmnm) group at the wobble position (U34) of certain tRNAs, forming tRNA-cmnm(5)s(2)U34.</text>
</comment>
<comment type="cofactor">
    <cofactor evidence="1">
        <name>K(+)</name>
        <dbReference type="ChEBI" id="CHEBI:29103"/>
    </cofactor>
    <text evidence="1">Binds 1 potassium ion per subunit.</text>
</comment>
<comment type="subunit">
    <text evidence="1">Homodimer. Heterotetramer of two MnmE and two MnmG subunits.</text>
</comment>
<comment type="subcellular location">
    <subcellularLocation>
        <location evidence="1">Cytoplasm</location>
    </subcellularLocation>
</comment>
<comment type="similarity">
    <text evidence="1">Belongs to the TRAFAC class TrmE-Era-EngA-EngB-Septin-like GTPase superfamily. TrmE GTPase family.</text>
</comment>
<comment type="sequence caution" evidence="2">
    <conflict type="erroneous initiation">
        <sequence resource="EMBL-CDS" id="ABE57047"/>
    </conflict>
</comment>
<proteinExistence type="inferred from homology"/>
<protein>
    <recommendedName>
        <fullName evidence="1">tRNA modification GTPase MnmE</fullName>
        <ecNumber evidence="1">3.6.-.-</ecNumber>
    </recommendedName>
</protein>
<gene>
    <name evidence="1" type="primary">mnmE</name>
    <name evidence="1" type="synonym">trmE</name>
    <name type="ordered locus">Sden_3774</name>
</gene>
<reference key="1">
    <citation type="submission" date="2006-03" db="EMBL/GenBank/DDBJ databases">
        <title>Complete sequence of Shewanella denitrificans OS217.</title>
        <authorList>
            <consortium name="US DOE Joint Genome Institute"/>
            <person name="Copeland A."/>
            <person name="Lucas S."/>
            <person name="Lapidus A."/>
            <person name="Barry K."/>
            <person name="Detter J.C."/>
            <person name="Glavina del Rio T."/>
            <person name="Hammon N."/>
            <person name="Israni S."/>
            <person name="Dalin E."/>
            <person name="Tice H."/>
            <person name="Pitluck S."/>
            <person name="Brettin T."/>
            <person name="Bruce D."/>
            <person name="Han C."/>
            <person name="Tapia R."/>
            <person name="Gilna P."/>
            <person name="Kiss H."/>
            <person name="Schmutz J."/>
            <person name="Larimer F."/>
            <person name="Land M."/>
            <person name="Hauser L."/>
            <person name="Kyrpides N."/>
            <person name="Lykidis A."/>
            <person name="Richardson P."/>
        </authorList>
    </citation>
    <scope>NUCLEOTIDE SEQUENCE [LARGE SCALE GENOMIC DNA]</scope>
    <source>
        <strain>OS217 / ATCC BAA-1090 / DSM 15013</strain>
    </source>
</reference>
<keyword id="KW-0963">Cytoplasm</keyword>
<keyword id="KW-0342">GTP-binding</keyword>
<keyword id="KW-0378">Hydrolase</keyword>
<keyword id="KW-0460">Magnesium</keyword>
<keyword id="KW-0479">Metal-binding</keyword>
<keyword id="KW-0547">Nucleotide-binding</keyword>
<keyword id="KW-0630">Potassium</keyword>
<keyword id="KW-1185">Reference proteome</keyword>
<keyword id="KW-0819">tRNA processing</keyword>
<sequence>MTTDTIVAQATAPGRGGVGIIRISGDLATNVAMAVLGKVPKTRYADYCDFKDADDRVIDQGIALFFKGPNSFTGEDVLELQGHGGQIVLDMLIKRVMQVSGVRIAKPGEFSEQAFLNDKLDLTQAEAIADLIDATSEQAAKSALQSLQGEFSKEVHELVEQVTNLRLYVEAAIDFPDEEVDFLSDGKIANALYRIIAKLDTVQDSAKQGSIIREGMKVVIAGRPNAGKSSLLNALAGKESAIVTEIAGTTRDVLREHIHLDGMPLHIIDTAGLRDTLDTVEKIGIERAWAEIATADRVLFMVDGTTTDAVDPHDIWPDFIDRLPTRLGVTVVRNKADLTGESLEKSQEQGFDVYRISAKTGLGVEELKQHLKSLMGYQSNLEGGFIARRRHLEALELAASHLQLGKEQLEVYLAGELLAEELRMAQMALSEITGKFTSDDLLGKIFSSFCIGK</sequence>
<evidence type="ECO:0000255" key="1">
    <source>
        <dbReference type="HAMAP-Rule" id="MF_00379"/>
    </source>
</evidence>
<evidence type="ECO:0000305" key="2"/>